<keyword id="KW-1185">Reference proteome</keyword>
<keyword id="KW-0687">Ribonucleoprotein</keyword>
<keyword id="KW-0689">Ribosomal protein</keyword>
<keyword id="KW-0694">RNA-binding</keyword>
<keyword id="KW-0699">rRNA-binding</keyword>
<proteinExistence type="inferred from homology"/>
<gene>
    <name evidence="1" type="primary">rplU</name>
    <name type="ordered locus">WS0503</name>
</gene>
<accession>Q7MA30</accession>
<name>RL21_WOLSU</name>
<evidence type="ECO:0000255" key="1">
    <source>
        <dbReference type="HAMAP-Rule" id="MF_01363"/>
    </source>
</evidence>
<evidence type="ECO:0000305" key="2"/>
<protein>
    <recommendedName>
        <fullName evidence="1">Large ribosomal subunit protein bL21</fullName>
    </recommendedName>
    <alternativeName>
        <fullName evidence="2">50S ribosomal protein L21</fullName>
    </alternativeName>
</protein>
<organism>
    <name type="scientific">Wolinella succinogenes (strain ATCC 29543 / DSM 1740 / CCUG 13145 / JCM 31913 / LMG 7466 / NCTC 11488 / FDC 602W)</name>
    <name type="common">Vibrio succinogenes</name>
    <dbReference type="NCBI Taxonomy" id="273121"/>
    <lineage>
        <taxon>Bacteria</taxon>
        <taxon>Pseudomonadati</taxon>
        <taxon>Campylobacterota</taxon>
        <taxon>Epsilonproteobacteria</taxon>
        <taxon>Campylobacterales</taxon>
        <taxon>Helicobacteraceae</taxon>
        <taxon>Wolinella</taxon>
    </lineage>
</organism>
<reference key="1">
    <citation type="journal article" date="2003" name="Proc. Natl. Acad. Sci. U.S.A.">
        <title>Complete genome sequence and analysis of Wolinella succinogenes.</title>
        <authorList>
            <person name="Baar C."/>
            <person name="Eppinger M."/>
            <person name="Raddatz G."/>
            <person name="Simon J."/>
            <person name="Lanz C."/>
            <person name="Klimmek O."/>
            <person name="Nandakumar R."/>
            <person name="Gross R."/>
            <person name="Rosinus A."/>
            <person name="Keller H."/>
            <person name="Jagtap P."/>
            <person name="Linke B."/>
            <person name="Meyer F."/>
            <person name="Lederer H."/>
            <person name="Schuster S.C."/>
        </authorList>
    </citation>
    <scope>NUCLEOTIDE SEQUENCE [LARGE SCALE GENOMIC DNA]</scope>
    <source>
        <strain>ATCC 29543 / DSM 1740 / CCUG 13145 / JCM 31913 / LMG 7466 / NCTC 11488 / FDC 602W</strain>
    </source>
</reference>
<comment type="function">
    <text evidence="1">This protein binds to 23S rRNA in the presence of protein L20.</text>
</comment>
<comment type="subunit">
    <text evidence="1">Part of the 50S ribosomal subunit. Contacts protein L20.</text>
</comment>
<comment type="similarity">
    <text evidence="1">Belongs to the bacterial ribosomal protein bL21 family.</text>
</comment>
<dbReference type="EMBL" id="BX571658">
    <property type="protein sequence ID" value="CAE09640.1"/>
    <property type="molecule type" value="Genomic_DNA"/>
</dbReference>
<dbReference type="RefSeq" id="WP_011138440.1">
    <property type="nucleotide sequence ID" value="NC_005090.1"/>
</dbReference>
<dbReference type="SMR" id="Q7MA30"/>
<dbReference type="STRING" id="273121.WS0503"/>
<dbReference type="KEGG" id="wsu:WS0503"/>
<dbReference type="eggNOG" id="COG0261">
    <property type="taxonomic scope" value="Bacteria"/>
</dbReference>
<dbReference type="HOGENOM" id="CLU_061463_3_2_7"/>
<dbReference type="Proteomes" id="UP000000422">
    <property type="component" value="Chromosome"/>
</dbReference>
<dbReference type="GO" id="GO:0005737">
    <property type="term" value="C:cytoplasm"/>
    <property type="evidence" value="ECO:0007669"/>
    <property type="project" value="UniProtKB-ARBA"/>
</dbReference>
<dbReference type="GO" id="GO:1990904">
    <property type="term" value="C:ribonucleoprotein complex"/>
    <property type="evidence" value="ECO:0007669"/>
    <property type="project" value="UniProtKB-KW"/>
</dbReference>
<dbReference type="GO" id="GO:0005840">
    <property type="term" value="C:ribosome"/>
    <property type="evidence" value="ECO:0007669"/>
    <property type="project" value="UniProtKB-KW"/>
</dbReference>
<dbReference type="GO" id="GO:0019843">
    <property type="term" value="F:rRNA binding"/>
    <property type="evidence" value="ECO:0007669"/>
    <property type="project" value="UniProtKB-UniRule"/>
</dbReference>
<dbReference type="GO" id="GO:0003735">
    <property type="term" value="F:structural constituent of ribosome"/>
    <property type="evidence" value="ECO:0007669"/>
    <property type="project" value="InterPro"/>
</dbReference>
<dbReference type="GO" id="GO:0006412">
    <property type="term" value="P:translation"/>
    <property type="evidence" value="ECO:0007669"/>
    <property type="project" value="UniProtKB-UniRule"/>
</dbReference>
<dbReference type="HAMAP" id="MF_01363">
    <property type="entry name" value="Ribosomal_bL21"/>
    <property type="match status" value="1"/>
</dbReference>
<dbReference type="InterPro" id="IPR028909">
    <property type="entry name" value="bL21-like"/>
</dbReference>
<dbReference type="InterPro" id="IPR036164">
    <property type="entry name" value="bL21-like_sf"/>
</dbReference>
<dbReference type="InterPro" id="IPR001787">
    <property type="entry name" value="Ribosomal_bL21"/>
</dbReference>
<dbReference type="InterPro" id="IPR018258">
    <property type="entry name" value="Ribosomal_bL21_CS"/>
</dbReference>
<dbReference type="NCBIfam" id="TIGR00061">
    <property type="entry name" value="L21"/>
    <property type="match status" value="1"/>
</dbReference>
<dbReference type="PANTHER" id="PTHR21349">
    <property type="entry name" value="50S RIBOSOMAL PROTEIN L21"/>
    <property type="match status" value="1"/>
</dbReference>
<dbReference type="PANTHER" id="PTHR21349:SF0">
    <property type="entry name" value="LARGE RIBOSOMAL SUBUNIT PROTEIN BL21M"/>
    <property type="match status" value="1"/>
</dbReference>
<dbReference type="Pfam" id="PF00829">
    <property type="entry name" value="Ribosomal_L21p"/>
    <property type="match status" value="1"/>
</dbReference>
<dbReference type="SUPFAM" id="SSF141091">
    <property type="entry name" value="L21p-like"/>
    <property type="match status" value="1"/>
</dbReference>
<dbReference type="PROSITE" id="PS01169">
    <property type="entry name" value="RIBOSOMAL_L21"/>
    <property type="match status" value="1"/>
</dbReference>
<sequence length="103" mass="11884">MYAIVKNGGKQYKVQEGDIVLFDKMSLEPKSKVELNEVLALCKDDNLILGTPFVEGAKIEIEVINEDRAKKVVTFKKRRRKDSKTKRGFRRDFTRVRILKIAA</sequence>
<feature type="chain" id="PRO_0000270747" description="Large ribosomal subunit protein bL21">
    <location>
        <begin position="1"/>
        <end position="103"/>
    </location>
</feature>